<feature type="chain" id="PRO_1000199003" description="Aspartate--tRNA(Asp/Asn) ligase">
    <location>
        <begin position="1"/>
        <end position="591"/>
    </location>
</feature>
<feature type="region of interest" description="Aspartate" evidence="1">
    <location>
        <begin position="198"/>
        <end position="201"/>
    </location>
</feature>
<feature type="binding site" evidence="1">
    <location>
        <position position="174"/>
    </location>
    <ligand>
        <name>L-aspartate</name>
        <dbReference type="ChEBI" id="CHEBI:29991"/>
    </ligand>
</feature>
<feature type="binding site" evidence="1">
    <location>
        <begin position="220"/>
        <end position="222"/>
    </location>
    <ligand>
        <name>ATP</name>
        <dbReference type="ChEBI" id="CHEBI:30616"/>
    </ligand>
</feature>
<feature type="binding site" evidence="1">
    <location>
        <position position="220"/>
    </location>
    <ligand>
        <name>L-aspartate</name>
        <dbReference type="ChEBI" id="CHEBI:29991"/>
    </ligand>
</feature>
<feature type="binding site" evidence="1">
    <location>
        <position position="229"/>
    </location>
    <ligand>
        <name>ATP</name>
        <dbReference type="ChEBI" id="CHEBI:30616"/>
    </ligand>
</feature>
<feature type="binding site" evidence="1">
    <location>
        <position position="450"/>
    </location>
    <ligand>
        <name>L-aspartate</name>
        <dbReference type="ChEBI" id="CHEBI:29991"/>
    </ligand>
</feature>
<feature type="binding site" evidence="1">
    <location>
        <position position="483"/>
    </location>
    <ligand>
        <name>ATP</name>
        <dbReference type="ChEBI" id="CHEBI:30616"/>
    </ligand>
</feature>
<feature type="binding site" evidence="1">
    <location>
        <position position="490"/>
    </location>
    <ligand>
        <name>L-aspartate</name>
        <dbReference type="ChEBI" id="CHEBI:29991"/>
    </ligand>
</feature>
<feature type="binding site" evidence="1">
    <location>
        <begin position="535"/>
        <end position="538"/>
    </location>
    <ligand>
        <name>ATP</name>
        <dbReference type="ChEBI" id="CHEBI:30616"/>
    </ligand>
</feature>
<feature type="site" description="Important for tRNA non-discrimination" evidence="1">
    <location>
        <position position="31"/>
    </location>
</feature>
<feature type="site" description="Important for tRNA non-discrimination" evidence="1">
    <location>
        <position position="82"/>
    </location>
</feature>
<dbReference type="EC" id="6.1.1.23" evidence="1"/>
<dbReference type="EMBL" id="FM209186">
    <property type="protein sequence ID" value="CAW29106.1"/>
    <property type="molecule type" value="Genomic_DNA"/>
</dbReference>
<dbReference type="RefSeq" id="WP_003123218.1">
    <property type="nucleotide sequence ID" value="NC_011770.1"/>
</dbReference>
<dbReference type="SMR" id="B7UXW9"/>
<dbReference type="KEGG" id="pag:PLES_43511"/>
<dbReference type="HOGENOM" id="CLU_014330_3_2_6"/>
<dbReference type="GO" id="GO:0005737">
    <property type="term" value="C:cytoplasm"/>
    <property type="evidence" value="ECO:0007669"/>
    <property type="project" value="UniProtKB-SubCell"/>
</dbReference>
<dbReference type="GO" id="GO:0004815">
    <property type="term" value="F:aspartate-tRNA ligase activity"/>
    <property type="evidence" value="ECO:0007669"/>
    <property type="project" value="UniProtKB-UniRule"/>
</dbReference>
<dbReference type="GO" id="GO:0050560">
    <property type="term" value="F:aspartate-tRNA(Asn) ligase activity"/>
    <property type="evidence" value="ECO:0007669"/>
    <property type="project" value="UniProtKB-EC"/>
</dbReference>
<dbReference type="GO" id="GO:0005524">
    <property type="term" value="F:ATP binding"/>
    <property type="evidence" value="ECO:0007669"/>
    <property type="project" value="UniProtKB-UniRule"/>
</dbReference>
<dbReference type="GO" id="GO:0003676">
    <property type="term" value="F:nucleic acid binding"/>
    <property type="evidence" value="ECO:0007669"/>
    <property type="project" value="InterPro"/>
</dbReference>
<dbReference type="GO" id="GO:0006422">
    <property type="term" value="P:aspartyl-tRNA aminoacylation"/>
    <property type="evidence" value="ECO:0007669"/>
    <property type="project" value="UniProtKB-UniRule"/>
</dbReference>
<dbReference type="CDD" id="cd00777">
    <property type="entry name" value="AspRS_core"/>
    <property type="match status" value="1"/>
</dbReference>
<dbReference type="CDD" id="cd04317">
    <property type="entry name" value="EcAspRS_like_N"/>
    <property type="match status" value="1"/>
</dbReference>
<dbReference type="Gene3D" id="3.30.930.10">
    <property type="entry name" value="Bira Bifunctional Protein, Domain 2"/>
    <property type="match status" value="1"/>
</dbReference>
<dbReference type="Gene3D" id="3.30.1360.30">
    <property type="entry name" value="GAD-like domain"/>
    <property type="match status" value="1"/>
</dbReference>
<dbReference type="Gene3D" id="2.40.50.140">
    <property type="entry name" value="Nucleic acid-binding proteins"/>
    <property type="match status" value="1"/>
</dbReference>
<dbReference type="HAMAP" id="MF_00044">
    <property type="entry name" value="Asp_tRNA_synth_type1"/>
    <property type="match status" value="1"/>
</dbReference>
<dbReference type="InterPro" id="IPR004364">
    <property type="entry name" value="Aa-tRNA-synt_II"/>
</dbReference>
<dbReference type="InterPro" id="IPR006195">
    <property type="entry name" value="aa-tRNA-synth_II"/>
</dbReference>
<dbReference type="InterPro" id="IPR045864">
    <property type="entry name" value="aa-tRNA-synth_II/BPL/LPL"/>
</dbReference>
<dbReference type="InterPro" id="IPR004524">
    <property type="entry name" value="Asp-tRNA-ligase_1"/>
</dbReference>
<dbReference type="InterPro" id="IPR047089">
    <property type="entry name" value="Asp-tRNA-ligase_1_N"/>
</dbReference>
<dbReference type="InterPro" id="IPR002312">
    <property type="entry name" value="Asp/Asn-tRNA-synth_IIb"/>
</dbReference>
<dbReference type="InterPro" id="IPR047090">
    <property type="entry name" value="AspRS_core"/>
</dbReference>
<dbReference type="InterPro" id="IPR004115">
    <property type="entry name" value="GAD-like_sf"/>
</dbReference>
<dbReference type="InterPro" id="IPR029351">
    <property type="entry name" value="GAD_dom"/>
</dbReference>
<dbReference type="InterPro" id="IPR012340">
    <property type="entry name" value="NA-bd_OB-fold"/>
</dbReference>
<dbReference type="InterPro" id="IPR004365">
    <property type="entry name" value="NA-bd_OB_tRNA"/>
</dbReference>
<dbReference type="NCBIfam" id="TIGR00459">
    <property type="entry name" value="aspS_bact"/>
    <property type="match status" value="1"/>
</dbReference>
<dbReference type="NCBIfam" id="NF001750">
    <property type="entry name" value="PRK00476.1"/>
    <property type="match status" value="1"/>
</dbReference>
<dbReference type="PANTHER" id="PTHR22594:SF5">
    <property type="entry name" value="ASPARTATE--TRNA LIGASE, MITOCHONDRIAL"/>
    <property type="match status" value="1"/>
</dbReference>
<dbReference type="PANTHER" id="PTHR22594">
    <property type="entry name" value="ASPARTYL/LYSYL-TRNA SYNTHETASE"/>
    <property type="match status" value="1"/>
</dbReference>
<dbReference type="Pfam" id="PF02938">
    <property type="entry name" value="GAD"/>
    <property type="match status" value="1"/>
</dbReference>
<dbReference type="Pfam" id="PF00152">
    <property type="entry name" value="tRNA-synt_2"/>
    <property type="match status" value="1"/>
</dbReference>
<dbReference type="Pfam" id="PF01336">
    <property type="entry name" value="tRNA_anti-codon"/>
    <property type="match status" value="1"/>
</dbReference>
<dbReference type="PRINTS" id="PR01042">
    <property type="entry name" value="TRNASYNTHASP"/>
</dbReference>
<dbReference type="SUPFAM" id="SSF55681">
    <property type="entry name" value="Class II aaRS and biotin synthetases"/>
    <property type="match status" value="1"/>
</dbReference>
<dbReference type="SUPFAM" id="SSF55261">
    <property type="entry name" value="GAD domain-like"/>
    <property type="match status" value="1"/>
</dbReference>
<dbReference type="SUPFAM" id="SSF50249">
    <property type="entry name" value="Nucleic acid-binding proteins"/>
    <property type="match status" value="1"/>
</dbReference>
<dbReference type="PROSITE" id="PS50862">
    <property type="entry name" value="AA_TRNA_LIGASE_II"/>
    <property type="match status" value="1"/>
</dbReference>
<evidence type="ECO:0000255" key="1">
    <source>
        <dbReference type="HAMAP-Rule" id="MF_00044"/>
    </source>
</evidence>
<proteinExistence type="inferred from homology"/>
<protein>
    <recommendedName>
        <fullName evidence="1">Aspartate--tRNA(Asp/Asn) ligase</fullName>
        <ecNumber evidence="1">6.1.1.23</ecNumber>
    </recommendedName>
    <alternativeName>
        <fullName evidence="1">Aspartyl-tRNA synthetase</fullName>
        <shortName evidence="1">AspRS</shortName>
    </alternativeName>
    <alternativeName>
        <fullName evidence="1">Non-discriminating aspartyl-tRNA synthetase</fullName>
        <shortName evidence="1">ND-AspRS</shortName>
    </alternativeName>
</protein>
<organism>
    <name type="scientific">Pseudomonas aeruginosa (strain LESB58)</name>
    <dbReference type="NCBI Taxonomy" id="557722"/>
    <lineage>
        <taxon>Bacteria</taxon>
        <taxon>Pseudomonadati</taxon>
        <taxon>Pseudomonadota</taxon>
        <taxon>Gammaproteobacteria</taxon>
        <taxon>Pseudomonadales</taxon>
        <taxon>Pseudomonadaceae</taxon>
        <taxon>Pseudomonas</taxon>
    </lineage>
</organism>
<accession>B7UXW9</accession>
<sequence>MMRSHYCGQLNESLDGQEVTLCGWVHRRRDHGGVIFLDVRDREGLAQVVFDPDRAETFAKADRVRSEFVVKITGKVRLRPEGARNPNMASGSIEVLGYELEVLNQAETPPFPLDEYSDVGEETRLRYRFIDLRRPEMAAKLKLRARITSSIRRYLDDNGFLDVETPILGRPTPEGARDYLVPSRTYPGHFFALPQSPQLFKQLLMVAGFDRYYQIAKCFRDEDLRADRQPEFTQIDIETSFLDESDIIGITEKMVRQLFKEVLDVEFDEFPHMPFEEAMRRYGSDKPDLRIPLELVDVADQLKEVEFKVFSGPANDPKGRVAALRVPGAASMPRSQIDDYTKFVGIYGAKGLAYIKVNERAKGVEGLQSPIVKFIPEANLNVILDRVGAVDGDIVFFGADKAKIVCDALGALRIKVGHDLKLLTREWAPMWVVDFPMFEENDDGSLSALHHPFTSPKCTPAELEANPGAALSRAYDMVLNGTELGGGSIRIHDKSMQQAVFRVLGIDEAEQEEKFGFLLDALKYGAPPHGGLAFGLDRLVMLMTGASSIREVIAFPKTQSAGDVMTQAPGSVDGKALRELHIRLREQPKAE</sequence>
<comment type="function">
    <text evidence="1">Aspartyl-tRNA synthetase with relaxed tRNA specificity since it is able to aspartylate not only its cognate tRNA(Asp) but also tRNA(Asn). Reaction proceeds in two steps: L-aspartate is first activated by ATP to form Asp-AMP and then transferred to the acceptor end of tRNA(Asp/Asn).</text>
</comment>
<comment type="catalytic activity">
    <reaction evidence="1">
        <text>tRNA(Asx) + L-aspartate + ATP = L-aspartyl-tRNA(Asx) + AMP + diphosphate</text>
        <dbReference type="Rhea" id="RHEA:18349"/>
        <dbReference type="Rhea" id="RHEA-COMP:9710"/>
        <dbReference type="Rhea" id="RHEA-COMP:9711"/>
        <dbReference type="ChEBI" id="CHEBI:29991"/>
        <dbReference type="ChEBI" id="CHEBI:30616"/>
        <dbReference type="ChEBI" id="CHEBI:33019"/>
        <dbReference type="ChEBI" id="CHEBI:78442"/>
        <dbReference type="ChEBI" id="CHEBI:78516"/>
        <dbReference type="ChEBI" id="CHEBI:456215"/>
        <dbReference type="EC" id="6.1.1.23"/>
    </reaction>
</comment>
<comment type="subunit">
    <text evidence="1">Homodimer.</text>
</comment>
<comment type="subcellular location">
    <subcellularLocation>
        <location evidence="1">Cytoplasm</location>
    </subcellularLocation>
</comment>
<comment type="similarity">
    <text evidence="1">Belongs to the class-II aminoacyl-tRNA synthetase family. Type 1 subfamily.</text>
</comment>
<gene>
    <name evidence="1" type="primary">aspS</name>
    <name type="ordered locus">PLES_43511</name>
</gene>
<keyword id="KW-0030">Aminoacyl-tRNA synthetase</keyword>
<keyword id="KW-0067">ATP-binding</keyword>
<keyword id="KW-0963">Cytoplasm</keyword>
<keyword id="KW-0436">Ligase</keyword>
<keyword id="KW-0547">Nucleotide-binding</keyword>
<keyword id="KW-0648">Protein biosynthesis</keyword>
<reference key="1">
    <citation type="journal article" date="2009" name="Genome Res.">
        <title>Newly introduced genomic prophage islands are critical determinants of in vivo competitiveness in the Liverpool epidemic strain of Pseudomonas aeruginosa.</title>
        <authorList>
            <person name="Winstanley C."/>
            <person name="Langille M.G.I."/>
            <person name="Fothergill J.L."/>
            <person name="Kukavica-Ibrulj I."/>
            <person name="Paradis-Bleau C."/>
            <person name="Sanschagrin F."/>
            <person name="Thomson N.R."/>
            <person name="Winsor G.L."/>
            <person name="Quail M.A."/>
            <person name="Lennard N."/>
            <person name="Bignell A."/>
            <person name="Clarke L."/>
            <person name="Seeger K."/>
            <person name="Saunders D."/>
            <person name="Harris D."/>
            <person name="Parkhill J."/>
            <person name="Hancock R.E.W."/>
            <person name="Brinkman F.S.L."/>
            <person name="Levesque R.C."/>
        </authorList>
    </citation>
    <scope>NUCLEOTIDE SEQUENCE [LARGE SCALE GENOMIC DNA]</scope>
    <source>
        <strain>LESB58</strain>
    </source>
</reference>
<name>SYDND_PSEA8</name>